<name>ABL_MLVAB</name>
<proteinExistence type="inferred from homology"/>
<gene>
    <name type="primary">ABL</name>
</gene>
<protein>
    <recommendedName>
        <fullName>Tyrosine-protein kinase transforming protein Abl</fullName>
        <ecNumber>2.7.10.2</ecNumber>
    </recommendedName>
    <alternativeName>
        <fullName>V-abl</fullName>
    </alternativeName>
</protein>
<dbReference type="EC" id="2.7.10.2"/>
<dbReference type="EMBL" id="V01541">
    <property type="status" value="NOT_ANNOTATED_CDS"/>
    <property type="molecule type" value="Genomic_DNA"/>
</dbReference>
<dbReference type="EMBL" id="K00010">
    <property type="protein sequence ID" value="AAA46470.1"/>
    <property type="molecule type" value="Genomic_RNA"/>
</dbReference>
<dbReference type="RefSeq" id="NP_955595.1">
    <property type="nucleotide sequence ID" value="NP_057866.1"/>
</dbReference>
<dbReference type="BMRB" id="P00521"/>
<dbReference type="SMR" id="P00521"/>
<dbReference type="IntAct" id="P00521">
    <property type="interactions" value="1"/>
</dbReference>
<dbReference type="BindingDB" id="P00521"/>
<dbReference type="ChEMBL" id="CHEMBL5166"/>
<dbReference type="DrugBank" id="DB03814">
    <property type="generic name" value="2-(N-morpholino)ethanesulfonic acid"/>
</dbReference>
<dbReference type="DrugBank" id="DB05489">
    <property type="generic name" value="ACA 125"/>
</dbReference>
<dbReference type="DrugBank" id="DB03878">
    <property type="generic name" value="N-[4-Methyl-3-[[4-(3-Pyridinyl)-2-Pyrimidinyl]Amino]Phenyl]-3-Pyridinecarboxamide"/>
</dbReference>
<dbReference type="DrugBank" id="DB02567">
    <property type="generic name" value="PD173955"/>
</dbReference>
<dbReference type="BRENDA" id="2.7.10.2">
    <property type="organism ID" value="1"/>
</dbReference>
<dbReference type="SABIO-RK" id="P00521"/>
<dbReference type="GO" id="GO:0005524">
    <property type="term" value="F:ATP binding"/>
    <property type="evidence" value="ECO:0007669"/>
    <property type="project" value="UniProtKB-KW"/>
</dbReference>
<dbReference type="GO" id="GO:0004715">
    <property type="term" value="F:non-membrane spanning protein tyrosine kinase activity"/>
    <property type="evidence" value="ECO:0007669"/>
    <property type="project" value="UniProtKB-EC"/>
</dbReference>
<dbReference type="CDD" id="cd05052">
    <property type="entry name" value="PTKc_Abl"/>
    <property type="match status" value="1"/>
</dbReference>
<dbReference type="CDD" id="cd09935">
    <property type="entry name" value="SH2_ABL"/>
    <property type="match status" value="1"/>
</dbReference>
<dbReference type="FunFam" id="1.10.510.10:FF:002964">
    <property type="entry name" value="Tyrosine-protein kinase"/>
    <property type="match status" value="1"/>
</dbReference>
<dbReference type="FunFam" id="1.20.120.330:FF:000003">
    <property type="entry name" value="Tyrosine-protein kinase"/>
    <property type="match status" value="1"/>
</dbReference>
<dbReference type="FunFam" id="3.30.200.20:FF:000037">
    <property type="entry name" value="Tyrosine-protein kinase"/>
    <property type="match status" value="1"/>
</dbReference>
<dbReference type="FunFam" id="3.30.505.10:FF:000004">
    <property type="entry name" value="Tyrosine-protein kinase"/>
    <property type="match status" value="1"/>
</dbReference>
<dbReference type="Gene3D" id="1.20.120.330">
    <property type="entry name" value="Nucleotidyltransferases domain 2"/>
    <property type="match status" value="1"/>
</dbReference>
<dbReference type="Gene3D" id="3.30.200.20">
    <property type="entry name" value="Phosphorylase Kinase, domain 1"/>
    <property type="match status" value="1"/>
</dbReference>
<dbReference type="Gene3D" id="3.30.505.10">
    <property type="entry name" value="SH2 domain"/>
    <property type="match status" value="1"/>
</dbReference>
<dbReference type="Gene3D" id="1.10.510.10">
    <property type="entry name" value="Transferase(Phosphotransferase) domain 1"/>
    <property type="match status" value="1"/>
</dbReference>
<dbReference type="InterPro" id="IPR035837">
    <property type="entry name" value="ABL_SH2"/>
</dbReference>
<dbReference type="InterPro" id="IPR015015">
    <property type="entry name" value="F-actin-binding"/>
</dbReference>
<dbReference type="InterPro" id="IPR011009">
    <property type="entry name" value="Kinase-like_dom_sf"/>
</dbReference>
<dbReference type="InterPro" id="IPR050198">
    <property type="entry name" value="Non-receptor_tyrosine_kinases"/>
</dbReference>
<dbReference type="InterPro" id="IPR000719">
    <property type="entry name" value="Prot_kinase_dom"/>
</dbReference>
<dbReference type="InterPro" id="IPR017441">
    <property type="entry name" value="Protein_kinase_ATP_BS"/>
</dbReference>
<dbReference type="InterPro" id="IPR001245">
    <property type="entry name" value="Ser-Thr/Tyr_kinase_cat_dom"/>
</dbReference>
<dbReference type="InterPro" id="IPR000980">
    <property type="entry name" value="SH2"/>
</dbReference>
<dbReference type="InterPro" id="IPR036860">
    <property type="entry name" value="SH2_dom_sf"/>
</dbReference>
<dbReference type="InterPro" id="IPR008266">
    <property type="entry name" value="Tyr_kinase_AS"/>
</dbReference>
<dbReference type="InterPro" id="IPR020635">
    <property type="entry name" value="Tyr_kinase_cat_dom"/>
</dbReference>
<dbReference type="PANTHER" id="PTHR24418">
    <property type="entry name" value="TYROSINE-PROTEIN KINASE"/>
    <property type="match status" value="1"/>
</dbReference>
<dbReference type="Pfam" id="PF08919">
    <property type="entry name" value="F_actin_bind"/>
    <property type="match status" value="1"/>
</dbReference>
<dbReference type="Pfam" id="PF07714">
    <property type="entry name" value="PK_Tyr_Ser-Thr"/>
    <property type="match status" value="1"/>
</dbReference>
<dbReference type="Pfam" id="PF00017">
    <property type="entry name" value="SH2"/>
    <property type="match status" value="1"/>
</dbReference>
<dbReference type="PRINTS" id="PR00401">
    <property type="entry name" value="SH2DOMAIN"/>
</dbReference>
<dbReference type="PRINTS" id="PR00109">
    <property type="entry name" value="TYRKINASE"/>
</dbReference>
<dbReference type="SMART" id="SM00808">
    <property type="entry name" value="FABD"/>
    <property type="match status" value="1"/>
</dbReference>
<dbReference type="SMART" id="SM00252">
    <property type="entry name" value="SH2"/>
    <property type="match status" value="1"/>
</dbReference>
<dbReference type="SMART" id="SM00219">
    <property type="entry name" value="TyrKc"/>
    <property type="match status" value="1"/>
</dbReference>
<dbReference type="SUPFAM" id="SSF56112">
    <property type="entry name" value="Protein kinase-like (PK-like)"/>
    <property type="match status" value="1"/>
</dbReference>
<dbReference type="SUPFAM" id="SSF55550">
    <property type="entry name" value="SH2 domain"/>
    <property type="match status" value="1"/>
</dbReference>
<dbReference type="PROSITE" id="PS00107">
    <property type="entry name" value="PROTEIN_KINASE_ATP"/>
    <property type="match status" value="1"/>
</dbReference>
<dbReference type="PROSITE" id="PS50011">
    <property type="entry name" value="PROTEIN_KINASE_DOM"/>
    <property type="match status" value="1"/>
</dbReference>
<dbReference type="PROSITE" id="PS00109">
    <property type="entry name" value="PROTEIN_KINASE_TYR"/>
    <property type="match status" value="1"/>
</dbReference>
<dbReference type="PROSITE" id="PS50001">
    <property type="entry name" value="SH2"/>
    <property type="match status" value="1"/>
</dbReference>
<accession>P00521</accession>
<organismHost>
    <name type="scientific">Mus musculus</name>
    <name type="common">Mouse</name>
    <dbReference type="NCBI Taxonomy" id="10090"/>
</organismHost>
<evidence type="ECO:0000250" key="1"/>
<evidence type="ECO:0000255" key="2">
    <source>
        <dbReference type="PROSITE-ProRule" id="PRU00159"/>
    </source>
</evidence>
<evidence type="ECO:0000255" key="3">
    <source>
        <dbReference type="PROSITE-ProRule" id="PRU00191"/>
    </source>
</evidence>
<evidence type="ECO:0000255" key="4">
    <source>
        <dbReference type="PROSITE-ProRule" id="PRU10028"/>
    </source>
</evidence>
<evidence type="ECO:0000256" key="5">
    <source>
        <dbReference type="SAM" id="MobiDB-lite"/>
    </source>
</evidence>
<keyword id="KW-0067">ATP-binding</keyword>
<keyword id="KW-0418">Kinase</keyword>
<keyword id="KW-0547">Nucleotide-binding</keyword>
<keyword id="KW-0553">Oncogene</keyword>
<keyword id="KW-0727">SH2 domain</keyword>
<keyword id="KW-0808">Transferase</keyword>
<keyword id="KW-0829">Tyrosine-protein kinase</keyword>
<feature type="chain" id="PRO_0000088057" description="Tyrosine-protein kinase transforming protein Abl">
    <location>
        <begin position="1"/>
        <end position="746"/>
    </location>
</feature>
<feature type="domain" description="SH2" evidence="3">
    <location>
        <begin position="13"/>
        <end position="103"/>
    </location>
</feature>
<feature type="domain" description="Protein kinase" evidence="2">
    <location>
        <begin position="128"/>
        <end position="379"/>
    </location>
</feature>
<feature type="region of interest" description="Disordered" evidence="5">
    <location>
        <begin position="389"/>
        <end position="613"/>
    </location>
</feature>
<feature type="short sequence motif" description="Kinase activation loop" evidence="1">
    <location>
        <begin position="267"/>
        <end position="291"/>
    </location>
</feature>
<feature type="compositionally biased region" description="Basic and acidic residues" evidence="5">
    <location>
        <begin position="498"/>
        <end position="508"/>
    </location>
</feature>
<feature type="compositionally biased region" description="Low complexity" evidence="5">
    <location>
        <begin position="592"/>
        <end position="602"/>
    </location>
</feature>
<feature type="active site" description="Proton acceptor" evidence="2 4">
    <location>
        <position position="249"/>
    </location>
</feature>
<feature type="binding site" evidence="2">
    <location>
        <begin position="134"/>
        <end position="142"/>
    </location>
    <ligand>
        <name>ATP</name>
        <dbReference type="ChEBI" id="CHEBI:30616"/>
    </ligand>
</feature>
<feature type="binding site" evidence="2">
    <location>
        <position position="157"/>
    </location>
    <ligand>
        <name>ATP</name>
        <dbReference type="ChEBI" id="CHEBI:30616"/>
    </ligand>
</feature>
<feature type="binding site" evidence="2">
    <location>
        <begin position="202"/>
        <end position="208"/>
    </location>
    <ligand>
        <name>ATP</name>
        <dbReference type="ChEBI" id="CHEBI:30616"/>
    </ligand>
</feature>
<comment type="catalytic activity">
    <reaction evidence="4">
        <text>L-tyrosyl-[protein] + ATP = O-phospho-L-tyrosyl-[protein] + ADP + H(+)</text>
        <dbReference type="Rhea" id="RHEA:10596"/>
        <dbReference type="Rhea" id="RHEA-COMP:10136"/>
        <dbReference type="Rhea" id="RHEA-COMP:20101"/>
        <dbReference type="ChEBI" id="CHEBI:15378"/>
        <dbReference type="ChEBI" id="CHEBI:30616"/>
        <dbReference type="ChEBI" id="CHEBI:46858"/>
        <dbReference type="ChEBI" id="CHEBI:61978"/>
        <dbReference type="ChEBI" id="CHEBI:456216"/>
        <dbReference type="EC" id="2.7.10.2"/>
    </reaction>
</comment>
<comment type="miscellaneous">
    <text>This protein is synthesized as a Gag-Abl polyprotein.</text>
</comment>
<comment type="similarity">
    <text evidence="2">Belongs to the protein kinase superfamily. Tyr protein kinase family. ABL subfamily.</text>
</comment>
<sequence>YITPVNSLEKHSWYHGPVSRNAAEYLLSSGINGSFLVRESESSPGQRSISLRYEGRVYHYRINTASDGKLYVSSESRFNTLAELVHHHSTVADGLITTLHYPAPKRNKPTIYGVSPNYDKWEMERTDITMKHKLGGGQYGEVYEGVWKKYSLTVAVKTLKEDTMEVEEFLKEAAVMKEIKHPNLVQLLGVCTREPPFYIITEFMTYGNLLDYLRECNRQEVSAVVLLYMATQISSAMEYLEKKNFIHRDLAARNCLVGENHLVKVADFGLSRLMTGDTYTAHAGAKFPIKWTAPESLAYNKFSIKSDVWAFGVLLWEIATYGMSPYPGIDLSQVYELLEKDYRMERPEGCPEKVYELMRACWQWNPSDRPSFAEIHQAFETMFQESSISDEVEKELGKRGTRGGAGSMLQAPELPTKTRTCRRAAEQKASPPSLTPKLLRRQVTASPSSGLSHKKEATKGSASGMGTPATAEPAPPSNKVGLSKASSEEMRVRRHKHSSESPGRDKGRLAKLKPAPPPPPACTGKAGKPAQSPSQEAGEAGGPTKTKCTSLAMDAVNTDPTKAGPPGEGLRKPVPPSVPKPQSTAKPPGTPTSPVSTPSTAPAPSPLAGDQQPSSAAFIPLISTRVSLRKTRQPPERIASGTITKGVVLDSTEALCLAISRNSEQMASHSAVLEAGKNLYTFCVSYVDSIQQMRNKFAFREAINKLESNLRELQICPATASSGPAATQDFSKLLSSVKEISDIVRR</sequence>
<reference key="1">
    <citation type="journal article" date="1983" name="Proc. Natl. Acad. Sci. U.S.A.">
        <title>Nucleotide sequence of Abelson murine leukemia virus genome: structural similarity of its transforming gene product to other onc gene products with tyrosine-specific kinase activity.</title>
        <authorList>
            <person name="Reddy E.P."/>
            <person name="Smith M.J."/>
            <person name="Srinivasan A."/>
        </authorList>
    </citation>
    <scope>NUCLEOTIDE SEQUENCE</scope>
</reference>
<reference key="2">
    <citation type="journal article" date="1983" name="Proc. Natl. Acad. Sci. U.S.A.">
        <authorList>
            <person name="Reddy E.P."/>
            <person name="Smith M.J."/>
            <person name="Srinivasan A."/>
        </authorList>
    </citation>
    <scope>ERRATUM OF PUBMED:6304726</scope>
    <scope>SEQUENCE REVISION TO 588-746</scope>
</reference>
<reference key="3">
    <citation type="journal article" date="1983" name="Nature">
        <title>Homology between phosphotyrosine acceptor site of human c-abl and viral oncogene products.</title>
        <authorList>
            <person name="Groffen J."/>
            <person name="Heisterkamp N."/>
            <person name="Reynolds F.H. Jr."/>
            <person name="Stephenson J.R."/>
        </authorList>
    </citation>
    <scope>NUCLEOTIDE SEQUENCE OF 233-327</scope>
</reference>
<organism>
    <name type="scientific">Abelson murine leukemia virus</name>
    <dbReference type="NCBI Taxonomy" id="11788"/>
    <lineage>
        <taxon>Viruses</taxon>
        <taxon>Riboviria</taxon>
        <taxon>Pararnavirae</taxon>
        <taxon>Artverviricota</taxon>
        <taxon>Revtraviricetes</taxon>
        <taxon>Ortervirales</taxon>
        <taxon>Retroviridae</taxon>
        <taxon>Orthoretrovirinae</taxon>
        <taxon>Gammaretrovirus</taxon>
    </lineage>
</organism>